<feature type="chain" id="PRO_1000192621" description="Ribosomal protein L11 methyltransferase">
    <location>
        <begin position="1"/>
        <end position="293"/>
    </location>
</feature>
<feature type="binding site" evidence="1">
    <location>
        <position position="145"/>
    </location>
    <ligand>
        <name>S-adenosyl-L-methionine</name>
        <dbReference type="ChEBI" id="CHEBI:59789"/>
    </ligand>
</feature>
<feature type="binding site" evidence="1">
    <location>
        <position position="166"/>
    </location>
    <ligand>
        <name>S-adenosyl-L-methionine</name>
        <dbReference type="ChEBI" id="CHEBI:59789"/>
    </ligand>
</feature>
<feature type="binding site" evidence="1">
    <location>
        <position position="188"/>
    </location>
    <ligand>
        <name>S-adenosyl-L-methionine</name>
        <dbReference type="ChEBI" id="CHEBI:59789"/>
    </ligand>
</feature>
<feature type="binding site" evidence="1">
    <location>
        <position position="230"/>
    </location>
    <ligand>
        <name>S-adenosyl-L-methionine</name>
        <dbReference type="ChEBI" id="CHEBI:59789"/>
    </ligand>
</feature>
<accession>B1XHM8</accession>
<dbReference type="EC" id="2.1.1.-" evidence="1"/>
<dbReference type="EMBL" id="CP000948">
    <property type="protein sequence ID" value="ACB04329.1"/>
    <property type="molecule type" value="Genomic_DNA"/>
</dbReference>
<dbReference type="RefSeq" id="WP_001145827.1">
    <property type="nucleotide sequence ID" value="NC_010473.1"/>
</dbReference>
<dbReference type="SMR" id="B1XHM8"/>
<dbReference type="GeneID" id="75206107"/>
<dbReference type="KEGG" id="ecd:ECDH10B_3434"/>
<dbReference type="HOGENOM" id="CLU_049382_4_1_6"/>
<dbReference type="GO" id="GO:0005829">
    <property type="term" value="C:cytosol"/>
    <property type="evidence" value="ECO:0007669"/>
    <property type="project" value="TreeGrafter"/>
</dbReference>
<dbReference type="GO" id="GO:0016279">
    <property type="term" value="F:protein-lysine N-methyltransferase activity"/>
    <property type="evidence" value="ECO:0007669"/>
    <property type="project" value="TreeGrafter"/>
</dbReference>
<dbReference type="GO" id="GO:0032259">
    <property type="term" value="P:methylation"/>
    <property type="evidence" value="ECO:0007669"/>
    <property type="project" value="UniProtKB-KW"/>
</dbReference>
<dbReference type="CDD" id="cd02440">
    <property type="entry name" value="AdoMet_MTases"/>
    <property type="match status" value="1"/>
</dbReference>
<dbReference type="FunFam" id="3.40.50.150:FF:000021">
    <property type="entry name" value="Ribosomal protein L11 methyltransferase"/>
    <property type="match status" value="1"/>
</dbReference>
<dbReference type="Gene3D" id="3.40.50.150">
    <property type="entry name" value="Vaccinia Virus protein VP39"/>
    <property type="match status" value="1"/>
</dbReference>
<dbReference type="HAMAP" id="MF_00735">
    <property type="entry name" value="Methyltr_PrmA"/>
    <property type="match status" value="1"/>
</dbReference>
<dbReference type="InterPro" id="IPR050078">
    <property type="entry name" value="Ribosomal_L11_MeTrfase_PrmA"/>
</dbReference>
<dbReference type="InterPro" id="IPR004498">
    <property type="entry name" value="Ribosomal_PrmA_MeTrfase"/>
</dbReference>
<dbReference type="InterPro" id="IPR029063">
    <property type="entry name" value="SAM-dependent_MTases_sf"/>
</dbReference>
<dbReference type="NCBIfam" id="TIGR00406">
    <property type="entry name" value="prmA"/>
    <property type="match status" value="1"/>
</dbReference>
<dbReference type="PANTHER" id="PTHR43648">
    <property type="entry name" value="ELECTRON TRANSFER FLAVOPROTEIN BETA SUBUNIT LYSINE METHYLTRANSFERASE"/>
    <property type="match status" value="1"/>
</dbReference>
<dbReference type="PANTHER" id="PTHR43648:SF1">
    <property type="entry name" value="ELECTRON TRANSFER FLAVOPROTEIN BETA SUBUNIT LYSINE METHYLTRANSFERASE"/>
    <property type="match status" value="1"/>
</dbReference>
<dbReference type="Pfam" id="PF06325">
    <property type="entry name" value="PrmA"/>
    <property type="match status" value="1"/>
</dbReference>
<dbReference type="PIRSF" id="PIRSF000401">
    <property type="entry name" value="RPL11_MTase"/>
    <property type="match status" value="1"/>
</dbReference>
<dbReference type="SUPFAM" id="SSF53335">
    <property type="entry name" value="S-adenosyl-L-methionine-dependent methyltransferases"/>
    <property type="match status" value="1"/>
</dbReference>
<sequence>MPWIQLKLNTTGANAEDLSDALMEAGAVSITFQDTHDTPVFEPLPGETRLWGDTDVIGLFDAETDMNDVVAILENHPLLGAGFAHKIEQLEDKDWEREWMDNFHPMRFGERLWICPSWRDVPDENAVNVMLDPGLAFGTGTHPTTSLCLQWLDSLDLTGKTVIDFGCGSGILAIAALKLGAAKAIGIDIDPQAIQASRDNAERNGVSDRLELYLPKDQPEEMKADVVVANILAGPLRELAPLISVLPVSGGLLGLSGILASQAESVCEAYADSFALDPVVEKEEWCRITGRKN</sequence>
<keyword id="KW-0963">Cytoplasm</keyword>
<keyword id="KW-0489">Methyltransferase</keyword>
<keyword id="KW-0949">S-adenosyl-L-methionine</keyword>
<keyword id="KW-0808">Transferase</keyword>
<comment type="function">
    <text evidence="1">Methylates ribosomal protein L11.</text>
</comment>
<comment type="catalytic activity">
    <reaction evidence="1">
        <text>L-lysyl-[protein] + 3 S-adenosyl-L-methionine = N(6),N(6),N(6)-trimethyl-L-lysyl-[protein] + 3 S-adenosyl-L-homocysteine + 3 H(+)</text>
        <dbReference type="Rhea" id="RHEA:54192"/>
        <dbReference type="Rhea" id="RHEA-COMP:9752"/>
        <dbReference type="Rhea" id="RHEA-COMP:13826"/>
        <dbReference type="ChEBI" id="CHEBI:15378"/>
        <dbReference type="ChEBI" id="CHEBI:29969"/>
        <dbReference type="ChEBI" id="CHEBI:57856"/>
        <dbReference type="ChEBI" id="CHEBI:59789"/>
        <dbReference type="ChEBI" id="CHEBI:61961"/>
    </reaction>
</comment>
<comment type="subcellular location">
    <subcellularLocation>
        <location evidence="1">Cytoplasm</location>
    </subcellularLocation>
</comment>
<comment type="similarity">
    <text evidence="1">Belongs to the methyltransferase superfamily. PrmA family.</text>
</comment>
<reference key="1">
    <citation type="journal article" date="2008" name="J. Bacteriol.">
        <title>The complete genome sequence of Escherichia coli DH10B: insights into the biology of a laboratory workhorse.</title>
        <authorList>
            <person name="Durfee T."/>
            <person name="Nelson R."/>
            <person name="Baldwin S."/>
            <person name="Plunkett G. III"/>
            <person name="Burland V."/>
            <person name="Mau B."/>
            <person name="Petrosino J.F."/>
            <person name="Qin X."/>
            <person name="Muzny D.M."/>
            <person name="Ayele M."/>
            <person name="Gibbs R.A."/>
            <person name="Csorgo B."/>
            <person name="Posfai G."/>
            <person name="Weinstock G.M."/>
            <person name="Blattner F.R."/>
        </authorList>
    </citation>
    <scope>NUCLEOTIDE SEQUENCE [LARGE SCALE GENOMIC DNA]</scope>
    <source>
        <strain>K12 / DH10B</strain>
    </source>
</reference>
<gene>
    <name evidence="1" type="primary">prmA</name>
    <name type="ordered locus">ECDH10B_3434</name>
</gene>
<organism>
    <name type="scientific">Escherichia coli (strain K12 / DH10B)</name>
    <dbReference type="NCBI Taxonomy" id="316385"/>
    <lineage>
        <taxon>Bacteria</taxon>
        <taxon>Pseudomonadati</taxon>
        <taxon>Pseudomonadota</taxon>
        <taxon>Gammaproteobacteria</taxon>
        <taxon>Enterobacterales</taxon>
        <taxon>Enterobacteriaceae</taxon>
        <taxon>Escherichia</taxon>
    </lineage>
</organism>
<proteinExistence type="inferred from homology"/>
<name>PRMA_ECODH</name>
<evidence type="ECO:0000255" key="1">
    <source>
        <dbReference type="HAMAP-Rule" id="MF_00735"/>
    </source>
</evidence>
<protein>
    <recommendedName>
        <fullName evidence="1">Ribosomal protein L11 methyltransferase</fullName>
        <shortName evidence="1">L11 Mtase</shortName>
        <ecNumber evidence="1">2.1.1.-</ecNumber>
    </recommendedName>
</protein>